<name>BIOD_CHLTE</name>
<evidence type="ECO:0000255" key="1">
    <source>
        <dbReference type="HAMAP-Rule" id="MF_00336"/>
    </source>
</evidence>
<reference key="1">
    <citation type="journal article" date="2002" name="Proc. Natl. Acad. Sci. U.S.A.">
        <title>The complete genome sequence of Chlorobium tepidum TLS, a photosynthetic, anaerobic, green-sulfur bacterium.</title>
        <authorList>
            <person name="Eisen J.A."/>
            <person name="Nelson K.E."/>
            <person name="Paulsen I.T."/>
            <person name="Heidelberg J.F."/>
            <person name="Wu M."/>
            <person name="Dodson R.J."/>
            <person name="DeBoy R.T."/>
            <person name="Gwinn M.L."/>
            <person name="Nelson W.C."/>
            <person name="Haft D.H."/>
            <person name="Hickey E.K."/>
            <person name="Peterson J.D."/>
            <person name="Durkin A.S."/>
            <person name="Kolonay J.F."/>
            <person name="Yang F."/>
            <person name="Holt I.E."/>
            <person name="Umayam L.A."/>
            <person name="Mason T.M."/>
            <person name="Brenner M."/>
            <person name="Shea T.P."/>
            <person name="Parksey D.S."/>
            <person name="Nierman W.C."/>
            <person name="Feldblyum T.V."/>
            <person name="Hansen C.L."/>
            <person name="Craven M.B."/>
            <person name="Radune D."/>
            <person name="Vamathevan J.J."/>
            <person name="Khouri H.M."/>
            <person name="White O."/>
            <person name="Gruber T.M."/>
            <person name="Ketchum K.A."/>
            <person name="Venter J.C."/>
            <person name="Tettelin H."/>
            <person name="Bryant D.A."/>
            <person name="Fraser C.M."/>
        </authorList>
    </citation>
    <scope>NUCLEOTIDE SEQUENCE [LARGE SCALE GENOMIC DNA]</scope>
    <source>
        <strain>ATCC 49652 / DSM 12025 / NBRC 103806 / TLS</strain>
    </source>
</reference>
<feature type="chain" id="PRO_0000187957" description="ATP-dependent dethiobiotin synthetase BioD">
    <location>
        <begin position="1"/>
        <end position="239"/>
    </location>
</feature>
<feature type="active site" evidence="1">
    <location>
        <position position="47"/>
    </location>
</feature>
<feature type="binding site" evidence="1">
    <location>
        <begin position="22"/>
        <end position="27"/>
    </location>
    <ligand>
        <name>ATP</name>
        <dbReference type="ChEBI" id="CHEBI:30616"/>
    </ligand>
</feature>
<feature type="binding site" evidence="1">
    <location>
        <position position="26"/>
    </location>
    <ligand>
        <name>Mg(2+)</name>
        <dbReference type="ChEBI" id="CHEBI:18420"/>
    </ligand>
</feature>
<feature type="binding site" evidence="1">
    <location>
        <position position="51"/>
    </location>
    <ligand>
        <name>substrate</name>
    </ligand>
</feature>
<feature type="binding site" evidence="1">
    <location>
        <position position="59"/>
    </location>
    <ligand>
        <name>ATP</name>
        <dbReference type="ChEBI" id="CHEBI:30616"/>
    </ligand>
</feature>
<feature type="binding site" evidence="1">
    <location>
        <position position="59"/>
    </location>
    <ligand>
        <name>Mg(2+)</name>
        <dbReference type="ChEBI" id="CHEBI:18420"/>
    </ligand>
</feature>
<feature type="binding site" evidence="1">
    <location>
        <begin position="124"/>
        <end position="127"/>
    </location>
    <ligand>
        <name>ATP</name>
        <dbReference type="ChEBI" id="CHEBI:30616"/>
    </ligand>
</feature>
<feature type="binding site" evidence="1">
    <location>
        <position position="124"/>
    </location>
    <ligand>
        <name>Mg(2+)</name>
        <dbReference type="ChEBI" id="CHEBI:18420"/>
    </ligand>
</feature>
<feature type="binding site" evidence="1">
    <location>
        <begin position="184"/>
        <end position="185"/>
    </location>
    <ligand>
        <name>ATP</name>
        <dbReference type="ChEBI" id="CHEBI:30616"/>
    </ligand>
</feature>
<proteinExistence type="inferred from homology"/>
<dbReference type="EC" id="6.3.3.3" evidence="1"/>
<dbReference type="EMBL" id="AE006470">
    <property type="protein sequence ID" value="AAM71296.1"/>
    <property type="molecule type" value="Genomic_DNA"/>
</dbReference>
<dbReference type="RefSeq" id="NP_660954.1">
    <property type="nucleotide sequence ID" value="NC_002932.3"/>
</dbReference>
<dbReference type="SMR" id="Q8KGC0"/>
<dbReference type="STRING" id="194439.CT0048"/>
<dbReference type="EnsemblBacteria" id="AAM71296">
    <property type="protein sequence ID" value="AAM71296"/>
    <property type="gene ID" value="CT0048"/>
</dbReference>
<dbReference type="KEGG" id="cte:CT0048"/>
<dbReference type="PATRIC" id="fig|194439.7.peg.47"/>
<dbReference type="eggNOG" id="COG0132">
    <property type="taxonomic scope" value="Bacteria"/>
</dbReference>
<dbReference type="HOGENOM" id="CLU_072551_3_0_10"/>
<dbReference type="OrthoDB" id="9802097at2"/>
<dbReference type="UniPathway" id="UPA00078">
    <property type="reaction ID" value="UER00161"/>
</dbReference>
<dbReference type="Proteomes" id="UP000001007">
    <property type="component" value="Chromosome"/>
</dbReference>
<dbReference type="GO" id="GO:0005829">
    <property type="term" value="C:cytosol"/>
    <property type="evidence" value="ECO:0007669"/>
    <property type="project" value="TreeGrafter"/>
</dbReference>
<dbReference type="GO" id="GO:0005524">
    <property type="term" value="F:ATP binding"/>
    <property type="evidence" value="ECO:0007669"/>
    <property type="project" value="UniProtKB-UniRule"/>
</dbReference>
<dbReference type="GO" id="GO:0004141">
    <property type="term" value="F:dethiobiotin synthase activity"/>
    <property type="evidence" value="ECO:0007669"/>
    <property type="project" value="UniProtKB-UniRule"/>
</dbReference>
<dbReference type="GO" id="GO:0000287">
    <property type="term" value="F:magnesium ion binding"/>
    <property type="evidence" value="ECO:0007669"/>
    <property type="project" value="UniProtKB-UniRule"/>
</dbReference>
<dbReference type="GO" id="GO:0009102">
    <property type="term" value="P:biotin biosynthetic process"/>
    <property type="evidence" value="ECO:0007669"/>
    <property type="project" value="UniProtKB-UniRule"/>
</dbReference>
<dbReference type="CDD" id="cd03109">
    <property type="entry name" value="DTBS"/>
    <property type="match status" value="1"/>
</dbReference>
<dbReference type="Gene3D" id="3.40.50.300">
    <property type="entry name" value="P-loop containing nucleotide triphosphate hydrolases"/>
    <property type="match status" value="1"/>
</dbReference>
<dbReference type="HAMAP" id="MF_00336">
    <property type="entry name" value="BioD"/>
    <property type="match status" value="1"/>
</dbReference>
<dbReference type="InterPro" id="IPR004472">
    <property type="entry name" value="DTB_synth_BioD"/>
</dbReference>
<dbReference type="InterPro" id="IPR027417">
    <property type="entry name" value="P-loop_NTPase"/>
</dbReference>
<dbReference type="NCBIfam" id="TIGR00347">
    <property type="entry name" value="bioD"/>
    <property type="match status" value="1"/>
</dbReference>
<dbReference type="PANTHER" id="PTHR43210:SF2">
    <property type="entry name" value="ATP-DEPENDENT DETHIOBIOTIN SYNTHETASE BIOD 2"/>
    <property type="match status" value="1"/>
</dbReference>
<dbReference type="PANTHER" id="PTHR43210">
    <property type="entry name" value="DETHIOBIOTIN SYNTHETASE"/>
    <property type="match status" value="1"/>
</dbReference>
<dbReference type="Pfam" id="PF13500">
    <property type="entry name" value="AAA_26"/>
    <property type="match status" value="1"/>
</dbReference>
<dbReference type="PIRSF" id="PIRSF006755">
    <property type="entry name" value="DTB_synth"/>
    <property type="match status" value="1"/>
</dbReference>
<dbReference type="SUPFAM" id="SSF52540">
    <property type="entry name" value="P-loop containing nucleoside triphosphate hydrolases"/>
    <property type="match status" value="1"/>
</dbReference>
<accession>Q8KGC0</accession>
<comment type="function">
    <text evidence="1">Catalyzes a mechanistically unusual reaction, the ATP-dependent insertion of CO2 between the N7 and N8 nitrogen atoms of 7,8-diaminopelargonic acid (DAPA, also called 7,8-diammoniononanoate) to form a ureido ring.</text>
</comment>
<comment type="catalytic activity">
    <reaction evidence="1">
        <text>(7R,8S)-7,8-diammoniononanoate + CO2 + ATP = (4R,5S)-dethiobiotin + ADP + phosphate + 3 H(+)</text>
        <dbReference type="Rhea" id="RHEA:15805"/>
        <dbReference type="ChEBI" id="CHEBI:15378"/>
        <dbReference type="ChEBI" id="CHEBI:16526"/>
        <dbReference type="ChEBI" id="CHEBI:30616"/>
        <dbReference type="ChEBI" id="CHEBI:43474"/>
        <dbReference type="ChEBI" id="CHEBI:149469"/>
        <dbReference type="ChEBI" id="CHEBI:149473"/>
        <dbReference type="ChEBI" id="CHEBI:456216"/>
        <dbReference type="EC" id="6.3.3.3"/>
    </reaction>
</comment>
<comment type="cofactor">
    <cofactor evidence="1">
        <name>Mg(2+)</name>
        <dbReference type="ChEBI" id="CHEBI:18420"/>
    </cofactor>
</comment>
<comment type="pathway">
    <text evidence="1">Cofactor biosynthesis; biotin biosynthesis; biotin from 7,8-diaminononanoate: step 1/2.</text>
</comment>
<comment type="subunit">
    <text evidence="1">Homodimer.</text>
</comment>
<comment type="subcellular location">
    <subcellularLocation>
        <location evidence="1">Cytoplasm</location>
    </subcellularLocation>
</comment>
<comment type="similarity">
    <text evidence="1">Belongs to the dethiobiotin synthetase family.</text>
</comment>
<protein>
    <recommendedName>
        <fullName evidence="1">ATP-dependent dethiobiotin synthetase BioD</fullName>
        <ecNumber evidence="1">6.3.3.3</ecNumber>
    </recommendedName>
    <alternativeName>
        <fullName evidence="1">DTB synthetase</fullName>
        <shortName evidence="1">DTBS</shortName>
    </alternativeName>
    <alternativeName>
        <fullName evidence="1">Dethiobiotin synthase</fullName>
    </alternativeName>
</protein>
<organism>
    <name type="scientific">Chlorobaculum tepidum (strain ATCC 49652 / DSM 12025 / NBRC 103806 / TLS)</name>
    <name type="common">Chlorobium tepidum</name>
    <dbReference type="NCBI Taxonomy" id="194439"/>
    <lineage>
        <taxon>Bacteria</taxon>
        <taxon>Pseudomonadati</taxon>
        <taxon>Chlorobiota</taxon>
        <taxon>Chlorobiia</taxon>
        <taxon>Chlorobiales</taxon>
        <taxon>Chlorobiaceae</taxon>
        <taxon>Chlorobaculum</taxon>
    </lineage>
</organism>
<keyword id="KW-0067">ATP-binding</keyword>
<keyword id="KW-0093">Biotin biosynthesis</keyword>
<keyword id="KW-0963">Cytoplasm</keyword>
<keyword id="KW-0436">Ligase</keyword>
<keyword id="KW-0460">Magnesium</keyword>
<keyword id="KW-0479">Metal-binding</keyword>
<keyword id="KW-0547">Nucleotide-binding</keyword>
<keyword id="KW-1185">Reference proteome</keyword>
<gene>
    <name evidence="1" type="primary">bioD</name>
    <name type="ordered locus">CT0048</name>
</gene>
<sequence>MLFQKEKVMKGQVLAISGIDTGIGKTVVTGLLARCFAETGWRTITQKIAQTGCEGVSEDIAEHRKLMGIDLQEADLDGTTCPYLFRFPASPHLAATVEGREIDFMTIRRSTFRLQKLYDLVLLEGVGGLLVPLTPELLFADYVRDAGYGLVLVSASRLGSINHTLLSLEACARRGIPVRAIVYNRYFEADERIAANTREVIAAALKRYGFGEAPVIDLNTSGLSAEPGDLQRILNPPGQ</sequence>